<comment type="catalytic activity">
    <reaction>
        <text>[protein]-peptidylproline (omega=180) = [protein]-peptidylproline (omega=0)</text>
        <dbReference type="Rhea" id="RHEA:16237"/>
        <dbReference type="Rhea" id="RHEA-COMP:10747"/>
        <dbReference type="Rhea" id="RHEA-COMP:10748"/>
        <dbReference type="ChEBI" id="CHEBI:83833"/>
        <dbReference type="ChEBI" id="CHEBI:83834"/>
        <dbReference type="EC" id="5.2.1.8"/>
    </reaction>
</comment>
<name>YACD_BACSU</name>
<reference key="1">
    <citation type="journal article" date="1994" name="DNA Res.">
        <title>Systematic sequencing of the 180 kilobase region of the Bacillus subtilis chromosome containing the replication origin.</title>
        <authorList>
            <person name="Ogasawara N."/>
            <person name="Nakai S."/>
            <person name="Yoshikawa H."/>
        </authorList>
    </citation>
    <scope>NUCLEOTIDE SEQUENCE [GENOMIC DNA]</scope>
    <source>
        <strain>168</strain>
    </source>
</reference>
<reference key="2">
    <citation type="journal article" date="1997" name="Nature">
        <title>The complete genome sequence of the Gram-positive bacterium Bacillus subtilis.</title>
        <authorList>
            <person name="Kunst F."/>
            <person name="Ogasawara N."/>
            <person name="Moszer I."/>
            <person name="Albertini A.M."/>
            <person name="Alloni G."/>
            <person name="Azevedo V."/>
            <person name="Bertero M.G."/>
            <person name="Bessieres P."/>
            <person name="Bolotin A."/>
            <person name="Borchert S."/>
            <person name="Borriss R."/>
            <person name="Boursier L."/>
            <person name="Brans A."/>
            <person name="Braun M."/>
            <person name="Brignell S.C."/>
            <person name="Bron S."/>
            <person name="Brouillet S."/>
            <person name="Bruschi C.V."/>
            <person name="Caldwell B."/>
            <person name="Capuano V."/>
            <person name="Carter N.M."/>
            <person name="Choi S.-K."/>
            <person name="Codani J.-J."/>
            <person name="Connerton I.F."/>
            <person name="Cummings N.J."/>
            <person name="Daniel R.A."/>
            <person name="Denizot F."/>
            <person name="Devine K.M."/>
            <person name="Duesterhoeft A."/>
            <person name="Ehrlich S.D."/>
            <person name="Emmerson P.T."/>
            <person name="Entian K.-D."/>
            <person name="Errington J."/>
            <person name="Fabret C."/>
            <person name="Ferrari E."/>
            <person name="Foulger D."/>
            <person name="Fritz C."/>
            <person name="Fujita M."/>
            <person name="Fujita Y."/>
            <person name="Fuma S."/>
            <person name="Galizzi A."/>
            <person name="Galleron N."/>
            <person name="Ghim S.-Y."/>
            <person name="Glaser P."/>
            <person name="Goffeau A."/>
            <person name="Golightly E.J."/>
            <person name="Grandi G."/>
            <person name="Guiseppi G."/>
            <person name="Guy B.J."/>
            <person name="Haga K."/>
            <person name="Haiech J."/>
            <person name="Harwood C.R."/>
            <person name="Henaut A."/>
            <person name="Hilbert H."/>
            <person name="Holsappel S."/>
            <person name="Hosono S."/>
            <person name="Hullo M.-F."/>
            <person name="Itaya M."/>
            <person name="Jones L.-M."/>
            <person name="Joris B."/>
            <person name="Karamata D."/>
            <person name="Kasahara Y."/>
            <person name="Klaerr-Blanchard M."/>
            <person name="Klein C."/>
            <person name="Kobayashi Y."/>
            <person name="Koetter P."/>
            <person name="Koningstein G."/>
            <person name="Krogh S."/>
            <person name="Kumano M."/>
            <person name="Kurita K."/>
            <person name="Lapidus A."/>
            <person name="Lardinois S."/>
            <person name="Lauber J."/>
            <person name="Lazarevic V."/>
            <person name="Lee S.-M."/>
            <person name="Levine A."/>
            <person name="Liu H."/>
            <person name="Masuda S."/>
            <person name="Mauel C."/>
            <person name="Medigue C."/>
            <person name="Medina N."/>
            <person name="Mellado R.P."/>
            <person name="Mizuno M."/>
            <person name="Moestl D."/>
            <person name="Nakai S."/>
            <person name="Noback M."/>
            <person name="Noone D."/>
            <person name="O'Reilly M."/>
            <person name="Ogawa K."/>
            <person name="Ogiwara A."/>
            <person name="Oudega B."/>
            <person name="Park S.-H."/>
            <person name="Parro V."/>
            <person name="Pohl T.M."/>
            <person name="Portetelle D."/>
            <person name="Porwollik S."/>
            <person name="Prescott A.M."/>
            <person name="Presecan E."/>
            <person name="Pujic P."/>
            <person name="Purnelle B."/>
            <person name="Rapoport G."/>
            <person name="Rey M."/>
            <person name="Reynolds S."/>
            <person name="Rieger M."/>
            <person name="Rivolta C."/>
            <person name="Rocha E."/>
            <person name="Roche B."/>
            <person name="Rose M."/>
            <person name="Sadaie Y."/>
            <person name="Sato T."/>
            <person name="Scanlan E."/>
            <person name="Schleich S."/>
            <person name="Schroeter R."/>
            <person name="Scoffone F."/>
            <person name="Sekiguchi J."/>
            <person name="Sekowska A."/>
            <person name="Seror S.J."/>
            <person name="Serror P."/>
            <person name="Shin B.-S."/>
            <person name="Soldo B."/>
            <person name="Sorokin A."/>
            <person name="Tacconi E."/>
            <person name="Takagi T."/>
            <person name="Takahashi H."/>
            <person name="Takemaru K."/>
            <person name="Takeuchi M."/>
            <person name="Tamakoshi A."/>
            <person name="Tanaka T."/>
            <person name="Terpstra P."/>
            <person name="Tognoni A."/>
            <person name="Tosato V."/>
            <person name="Uchiyama S."/>
            <person name="Vandenbol M."/>
            <person name="Vannier F."/>
            <person name="Vassarotti A."/>
            <person name="Viari A."/>
            <person name="Wambutt R."/>
            <person name="Wedler E."/>
            <person name="Wedler H."/>
            <person name="Weitzenegger T."/>
            <person name="Winters P."/>
            <person name="Wipat A."/>
            <person name="Yamamoto H."/>
            <person name="Yamane K."/>
            <person name="Yasumoto K."/>
            <person name="Yata K."/>
            <person name="Yoshida K."/>
            <person name="Yoshikawa H.-F."/>
            <person name="Zumstein E."/>
            <person name="Yoshikawa H."/>
            <person name="Danchin A."/>
        </authorList>
    </citation>
    <scope>NUCLEOTIDE SEQUENCE [LARGE SCALE GENOMIC DNA]</scope>
    <source>
        <strain>168</strain>
    </source>
</reference>
<sequence>MKSRTIWTIILGALLVCCIAVAYTLTKSQAGASSSGESIATIGGKSVTREEWLKEMEDQYGKSTLEDMINVRVVEQLAKKNKLKISKSEVDREFLLIKAVNNSFYEDEHTTEKEWKDQIRYNILLEDLLTRDIDISNKELESFYNKNKELYQFDDSYRIRHIVVKDEEEAREVLKELKGGSSFEAVAAERSTDRYTSPYGGDLGFVTEASDNIPSAYIEEAKTLKEDEWSQEPIKVSNGYAIIQLKEKLKARTFSFDEVKDQIRRQIAMDQLGDKATVKTLWKEADVSWFYGEKSTK</sequence>
<feature type="signal peptide" evidence="1">
    <location>
        <begin position="1"/>
        <end position="32"/>
    </location>
</feature>
<feature type="chain" id="PRO_0000193431" description="Putative peptidyl-prolyl cis-trans isomerase YacD">
    <location>
        <begin position="33"/>
        <end position="297"/>
    </location>
</feature>
<feature type="domain" description="PpiC" evidence="2">
    <location>
        <begin position="154"/>
        <end position="247"/>
    </location>
</feature>
<gene>
    <name type="primary">yacD</name>
    <name type="ordered locus">BSU00720</name>
</gene>
<dbReference type="EC" id="5.2.1.8"/>
<dbReference type="EMBL" id="D26185">
    <property type="protein sequence ID" value="BAA05307.1"/>
    <property type="molecule type" value="Genomic_DNA"/>
</dbReference>
<dbReference type="EMBL" id="AL009126">
    <property type="protein sequence ID" value="CAB11848.1"/>
    <property type="molecule type" value="Genomic_DNA"/>
</dbReference>
<dbReference type="PIR" id="S66102">
    <property type="entry name" value="S66102"/>
</dbReference>
<dbReference type="RefSeq" id="NP_387953.1">
    <property type="nucleotide sequence ID" value="NC_000964.3"/>
</dbReference>
<dbReference type="RefSeq" id="WP_003243824.1">
    <property type="nucleotide sequence ID" value="NZ_OZ025638.1"/>
</dbReference>
<dbReference type="SMR" id="P37566"/>
<dbReference type="FunCoup" id="P37566">
    <property type="interactions" value="106"/>
</dbReference>
<dbReference type="STRING" id="224308.BSU00720"/>
<dbReference type="PaxDb" id="224308-BSU00720"/>
<dbReference type="DNASU" id="936955"/>
<dbReference type="EnsemblBacteria" id="CAB11848">
    <property type="protein sequence ID" value="CAB11848"/>
    <property type="gene ID" value="BSU_00720"/>
</dbReference>
<dbReference type="GeneID" id="936955"/>
<dbReference type="KEGG" id="bsu:BSU00720"/>
<dbReference type="PATRIC" id="fig|224308.179.peg.72"/>
<dbReference type="eggNOG" id="COG0760">
    <property type="taxonomic scope" value="Bacteria"/>
</dbReference>
<dbReference type="InParanoid" id="P37566"/>
<dbReference type="OrthoDB" id="2677468at2"/>
<dbReference type="PhylomeDB" id="P37566"/>
<dbReference type="BioCyc" id="BSUB:BSU00720-MONOMER"/>
<dbReference type="Proteomes" id="UP000001570">
    <property type="component" value="Chromosome"/>
</dbReference>
<dbReference type="GO" id="GO:0003755">
    <property type="term" value="F:peptidyl-prolyl cis-trans isomerase activity"/>
    <property type="evidence" value="ECO:0007669"/>
    <property type="project" value="UniProtKB-KW"/>
</dbReference>
<dbReference type="Gene3D" id="3.10.50.40">
    <property type="match status" value="1"/>
</dbReference>
<dbReference type="Gene3D" id="1.10.4030.10">
    <property type="entry name" value="Porin chaperone SurA, peptide-binding domain"/>
    <property type="match status" value="1"/>
</dbReference>
<dbReference type="InterPro" id="IPR046357">
    <property type="entry name" value="PPIase_dom_sf"/>
</dbReference>
<dbReference type="InterPro" id="IPR000297">
    <property type="entry name" value="PPIase_PpiC"/>
</dbReference>
<dbReference type="InterPro" id="IPR023058">
    <property type="entry name" value="PPIase_PpiC_CS"/>
</dbReference>
<dbReference type="InterPro" id="IPR050245">
    <property type="entry name" value="PrsA_foldase"/>
</dbReference>
<dbReference type="InterPro" id="IPR027304">
    <property type="entry name" value="Trigger_fact/SurA_dom_sf"/>
</dbReference>
<dbReference type="PANTHER" id="PTHR47245:SF1">
    <property type="entry name" value="FOLDASE PROTEIN PRSA"/>
    <property type="match status" value="1"/>
</dbReference>
<dbReference type="PANTHER" id="PTHR47245">
    <property type="entry name" value="PEPTIDYLPROLYL ISOMERASE"/>
    <property type="match status" value="1"/>
</dbReference>
<dbReference type="Pfam" id="PF13145">
    <property type="entry name" value="Rotamase_2"/>
    <property type="match status" value="1"/>
</dbReference>
<dbReference type="Pfam" id="PF13624">
    <property type="entry name" value="SurA_N_3"/>
    <property type="match status" value="1"/>
</dbReference>
<dbReference type="SUPFAM" id="SSF54534">
    <property type="entry name" value="FKBP-like"/>
    <property type="match status" value="1"/>
</dbReference>
<dbReference type="SUPFAM" id="SSF109998">
    <property type="entry name" value="Triger factor/SurA peptide-binding domain-like"/>
    <property type="match status" value="1"/>
</dbReference>
<dbReference type="PROSITE" id="PS01096">
    <property type="entry name" value="PPIC_PPIASE_1"/>
    <property type="match status" value="1"/>
</dbReference>
<dbReference type="PROSITE" id="PS50198">
    <property type="entry name" value="PPIC_PPIASE_2"/>
    <property type="match status" value="1"/>
</dbReference>
<evidence type="ECO:0000255" key="1"/>
<evidence type="ECO:0000255" key="2">
    <source>
        <dbReference type="PROSITE-ProRule" id="PRU00278"/>
    </source>
</evidence>
<keyword id="KW-0413">Isomerase</keyword>
<keyword id="KW-1185">Reference proteome</keyword>
<keyword id="KW-0697">Rotamase</keyword>
<keyword id="KW-0732">Signal</keyword>
<accession>P37566</accession>
<protein>
    <recommendedName>
        <fullName>Putative peptidyl-prolyl cis-trans isomerase YacD</fullName>
        <shortName>PPIase YacD</shortName>
        <ecNumber>5.2.1.8</ecNumber>
    </recommendedName>
    <alternativeName>
        <fullName>Rotamase YacD</fullName>
    </alternativeName>
</protein>
<proteinExistence type="inferred from homology"/>
<organism>
    <name type="scientific">Bacillus subtilis (strain 168)</name>
    <dbReference type="NCBI Taxonomy" id="224308"/>
    <lineage>
        <taxon>Bacteria</taxon>
        <taxon>Bacillati</taxon>
        <taxon>Bacillota</taxon>
        <taxon>Bacilli</taxon>
        <taxon>Bacillales</taxon>
        <taxon>Bacillaceae</taxon>
        <taxon>Bacillus</taxon>
    </lineage>
</organism>